<feature type="signal peptide" evidence="8">
    <location>
        <begin position="1"/>
        <end position="27"/>
    </location>
</feature>
<feature type="chain" id="PRO_0000014377" description="Insulin-like growth factor-binding protein 3">
    <location>
        <begin position="28"/>
        <end position="291"/>
    </location>
</feature>
<feature type="domain" description="IGFBP N-terminal" evidence="5">
    <location>
        <begin position="36"/>
        <end position="119"/>
    </location>
</feature>
<feature type="domain" description="Thyroglobulin type-1" evidence="4">
    <location>
        <begin position="210"/>
        <end position="285"/>
    </location>
</feature>
<feature type="region of interest" description="IGF-binding" evidence="3">
    <location>
        <begin position="28"/>
        <end position="134"/>
    </location>
</feature>
<feature type="region of interest" description="Disordered" evidence="6">
    <location>
        <begin position="132"/>
        <end position="162"/>
    </location>
</feature>
<feature type="region of interest" description="Disordered" evidence="6">
    <location>
        <begin position="177"/>
        <end position="211"/>
    </location>
</feature>
<feature type="compositionally biased region" description="Polar residues" evidence="6">
    <location>
        <begin position="146"/>
        <end position="155"/>
    </location>
</feature>
<feature type="compositionally biased region" description="Basic and acidic residues" evidence="6">
    <location>
        <begin position="177"/>
        <end position="190"/>
    </location>
</feature>
<feature type="compositionally biased region" description="Polar residues" evidence="6">
    <location>
        <begin position="191"/>
        <end position="202"/>
    </location>
</feature>
<feature type="modified residue" description="Phosphoserine" evidence="2">
    <location>
        <position position="148"/>
    </location>
</feature>
<feature type="modified residue" description="Phosphoserine" evidence="2">
    <location>
        <position position="201"/>
    </location>
</feature>
<feature type="glycosylation site" description="N-linked (GlcNAc...) asparagine" evidence="3">
    <location>
        <position position="118"/>
    </location>
</feature>
<feature type="glycosylation site" description="N-linked (GlcNAc...) asparagine" evidence="3">
    <location>
        <position position="136"/>
    </location>
</feature>
<feature type="glycosylation site" description="N-linked (GlcNAc...) asparagine" evidence="3">
    <location>
        <position position="199"/>
    </location>
</feature>
<feature type="disulfide bond" evidence="5">
    <location>
        <begin position="40"/>
        <end position="69"/>
    </location>
</feature>
<feature type="disulfide bond" evidence="5">
    <location>
        <begin position="43"/>
        <end position="71"/>
    </location>
</feature>
<feature type="disulfide bond" evidence="5">
    <location>
        <begin position="51"/>
        <end position="72"/>
    </location>
</feature>
<feature type="disulfide bond" evidence="5">
    <location>
        <begin position="60"/>
        <end position="75"/>
    </location>
</feature>
<feature type="disulfide bond" evidence="5">
    <location>
        <begin position="83"/>
        <end position="96"/>
    </location>
</feature>
<feature type="disulfide bond" evidence="5">
    <location>
        <begin position="90"/>
        <end position="116"/>
    </location>
</feature>
<feature type="disulfide bond" evidence="4">
    <location>
        <begin position="213"/>
        <end position="240"/>
    </location>
</feature>
<feature type="disulfide bond" evidence="4">
    <location>
        <begin position="251"/>
        <end position="262"/>
    </location>
</feature>
<feature type="disulfide bond" evidence="4">
    <location>
        <begin position="264"/>
        <end position="285"/>
    </location>
</feature>
<feature type="sequence conflict" description="In Ref. 1; AAA30582." evidence="9" ref="1">
    <original>RPA</original>
    <variation>PPR</variation>
    <location>
        <begin position="5"/>
        <end position="7"/>
    </location>
</feature>
<feature type="sequence conflict" description="In Ref. 1; AAA30582." evidence="9" ref="1">
    <original>EP</original>
    <variation>DA</variation>
    <location>
        <begin position="66"/>
        <end position="67"/>
    </location>
</feature>
<protein>
    <recommendedName>
        <fullName>Insulin-like growth factor-binding protein 3</fullName>
        <shortName>IBP-3</shortName>
        <shortName>IGF-binding protein 3</shortName>
        <shortName>IGFBP-3</shortName>
    </recommendedName>
</protein>
<proteinExistence type="evidence at protein level"/>
<sequence>MLRARPALWAAALTALTLLRGPPAARAGAGTMGAGPVVRCEPCDARAVAQCAPPPPSPPCAELVREPGCGCCLTCALREGQPCGVYTERCGSGLRCQPPPGDPRPLQALLDGRGLCANASAVGRLRPYLLPSASGNGSESEEDHSMGSTENQAGPSTHRVPVSKFHPIHTKMDVIKKGHAKDSQRYKVDYESQSTDTQNFSSESKRETEYGPCRREMEDTLNHLKFLNMLSPRGIHIPNCDKKGFYKKKQCRPSKGRKRGFCWCVDKYGQPLPGFDVKGKGDVHCYSMESK</sequence>
<reference key="1">
    <citation type="journal article" date="1991" name="Biochem. Biophys. Res. Commun.">
        <title>Cloning and characterization of bovine insulin-like growth factor binding protein-3 (bIGFBP-3).</title>
        <authorList>
            <person name="Spratt S.K."/>
            <person name="Tatsuno G.P."/>
            <person name="Sommer A."/>
        </authorList>
    </citation>
    <scope>NUCLEOTIDE SEQUENCE [MRNA]</scope>
</reference>
<reference key="2">
    <citation type="journal article" date="1997" name="Endocrinology">
        <title>Bovine insulin-like growth factor binding protein-3: organization of the chromosomal gene and functional analysis of its promoter.</title>
        <authorList>
            <person name="Erondu N.E."/>
            <person name="Toland B."/>
            <person name="Boes M."/>
            <person name="Dake B."/>
            <person name="Moser D.R."/>
            <person name="Bar R.S."/>
        </authorList>
    </citation>
    <scope>NUCLEOTIDE SEQUENCE [GENOMIC DNA / MRNA]</scope>
    <source>
        <tissue>Liver</tissue>
    </source>
</reference>
<reference key="3">
    <citation type="submission" date="2007-07" db="EMBL/GenBank/DDBJ databases">
        <authorList>
            <consortium name="NIH - Mammalian Gene Collection (MGC) project"/>
        </authorList>
    </citation>
    <scope>NUCLEOTIDE SEQUENCE [LARGE SCALE MRNA]</scope>
    <source>
        <strain>Hereford</strain>
        <tissue>Fetal lung</tissue>
    </source>
</reference>
<reference key="4">
    <citation type="journal article" date="1990" name="Endocrinology">
        <title>Structural and biological characterization of bovine insulin-like growth factor binding protein-3.</title>
        <authorList>
            <person name="Conover C.A."/>
            <person name="Ronk M."/>
            <person name="Lombana F."/>
            <person name="Powell D.R."/>
        </authorList>
    </citation>
    <scope>PROTEIN SEQUENCE OF 28-52</scope>
</reference>
<reference key="5">
    <citation type="journal article" date="1997" name="Anim. Genet.">
        <title>A novel polymorphism in the bovine insulin-like growth factor binding protein-3 (IGFBP3) gene.</title>
        <authorList>
            <person name="Maciulla J.H."/>
            <person name="Zhang H.M."/>
            <person name="Denise S.K."/>
        </authorList>
    </citation>
    <scope>NUCLEOTIDE SEQUENCE [GENOMIC DNA] OF 194-266</scope>
</reference>
<reference key="6">
    <citation type="journal article" date="2003" name="J. Biol. Chem.">
        <title>Cloning, expression, characterization and role in autocrine cell growth of cell surface retention sequence binding protein-1.</title>
        <authorList>
            <person name="Huang S.S."/>
            <person name="Tang F.-M."/>
            <person name="Huang Y.-H."/>
            <person name="Liu I.-H."/>
            <person name="Hsu S.-C."/>
            <person name="Chen S.-T."/>
            <person name="Huang J.S."/>
        </authorList>
    </citation>
    <scope>INTERACTION WITH XLKD1</scope>
</reference>
<gene>
    <name type="primary">IGFBP3</name>
</gene>
<comment type="function">
    <text evidence="2">Multifunctional protein that plays a critical role in regulating the availability of IGFs such as IGF1 and IGF2 to their receptors and thereby regulates IGF-mediated cellular processes including proliferation, differentiation, and apoptosis in a cell-type specific manner. Also exhibits IGF-independent antiproliferative and apoptotic effects mediated by its receptor TMEM219/IGFBP-3R. Inhibits the positive effect of humanin on insulin sensitivity. Promotes testicular germ cell apoptosis. Acts via LRP-1/alpha2M receptor, also known as TGF-beta type V receptor, to mediate cell growth inhibition independent of IGF1. Mechanistically, induces serine-specific dephosphorylation of IRS1 or IRS2 upon ligation to its receptor, leading to the inhibitory cascade. In the nucleus, interacts with transcription factors such as retinoid X receptor-alpha/RXRA to regulate transcriptional signaling and apoptosis.</text>
</comment>
<comment type="subunit">
    <text evidence="1 2">Interacts with XLKD1 (PubMed:12912978). Binds IGF2 more than IGF1. Forms a ternary complex of about 140 to 150 kDa with IGF1 or IGF2 and a 85 kDa glycoprotein (ALS). Interacts with humanin; humanin competes with importin KPNB1 for binding to IGFBP3, blocking IGFBP3 nuclear import and IGFBP3-mediated apoptosis. Interacts with TMEM219. Interacts with RXRA; this interaction modulates the transcriptional activity of RXRA. Interacts with LRP1; this interaction mediates cell growth inhibition independent of IGF1 (By similarity).</text>
</comment>
<comment type="subcellular location">
    <subcellularLocation>
        <location evidence="2">Secreted</location>
    </subcellularLocation>
    <subcellularLocation>
        <location evidence="2 7">Nucleus</location>
    </subcellularLocation>
</comment>
<comment type="tissue specificity">
    <text>Plasma; expressed by most tissues.</text>
</comment>
<comment type="PTM">
    <text evidence="2">Phosphorylated by FAM20C in the extracellular medium. Phosphorylated by CK2; resulting in decreased nuclear localization.</text>
</comment>
<dbReference type="EMBL" id="M76478">
    <property type="protein sequence ID" value="AAA30582.1"/>
    <property type="molecule type" value="mRNA"/>
</dbReference>
<dbReference type="EMBL" id="AF305199">
    <property type="protein sequence ID" value="AAG29824.1"/>
    <property type="molecule type" value="mRNA"/>
</dbReference>
<dbReference type="EMBL" id="AF305712">
    <property type="protein sequence ID" value="AAG29825.1"/>
    <property type="molecule type" value="Genomic_DNA"/>
</dbReference>
<dbReference type="EMBL" id="BC149336">
    <property type="protein sequence ID" value="AAI49337.1"/>
    <property type="molecule type" value="mRNA"/>
</dbReference>
<dbReference type="EMBL" id="U83465">
    <property type="protein sequence ID" value="AAB41430.1"/>
    <property type="molecule type" value="Genomic_DNA"/>
</dbReference>
<dbReference type="PIR" id="JN0064">
    <property type="entry name" value="JN0064"/>
</dbReference>
<dbReference type="RefSeq" id="NP_776981.1">
    <property type="nucleotide sequence ID" value="NM_174556.1"/>
</dbReference>
<dbReference type="SMR" id="P20959"/>
<dbReference type="FunCoup" id="P20959">
    <property type="interactions" value="217"/>
</dbReference>
<dbReference type="STRING" id="9913.ENSBTAP00000047769"/>
<dbReference type="MEROPS" id="I31.952"/>
<dbReference type="GlyCosmos" id="P20959">
    <property type="glycosylation" value="3 sites, No reported glycans"/>
</dbReference>
<dbReference type="GlyGen" id="P20959">
    <property type="glycosylation" value="3 sites"/>
</dbReference>
<dbReference type="PaxDb" id="9913-ENSBTAP00000047769"/>
<dbReference type="Ensembl" id="ENSBTAT00000053426.4">
    <property type="protein sequence ID" value="ENSBTAP00000047769.2"/>
    <property type="gene ID" value="ENSBTAG00000003994.7"/>
</dbReference>
<dbReference type="GeneID" id="282261"/>
<dbReference type="KEGG" id="bta:282261"/>
<dbReference type="CTD" id="3486"/>
<dbReference type="VEuPathDB" id="HostDB:ENSBTAG00000003994"/>
<dbReference type="VGNC" id="VGNC:30085">
    <property type="gene designation" value="IGFBP3"/>
</dbReference>
<dbReference type="eggNOG" id="ENOG502QWC0">
    <property type="taxonomic scope" value="Eukaryota"/>
</dbReference>
<dbReference type="GeneTree" id="ENSGT00940000158092"/>
<dbReference type="HOGENOM" id="CLU_070833_1_1_1"/>
<dbReference type="InParanoid" id="P20959"/>
<dbReference type="OMA" id="CKPLVPD"/>
<dbReference type="OrthoDB" id="6068400at2759"/>
<dbReference type="TreeFam" id="TF331211"/>
<dbReference type="Reactome" id="R-BTA-381426">
    <property type="pathway name" value="Regulation of Insulin-like Growth Factor (IGF) transport and uptake by Insulin-like Growth Factor Binding Proteins (IGFBPs)"/>
</dbReference>
<dbReference type="Reactome" id="R-BTA-6803211">
    <property type="pathway name" value="TP53 Regulates Transcription of Death Receptors and Ligands"/>
</dbReference>
<dbReference type="Reactome" id="R-BTA-8957275">
    <property type="pathway name" value="Post-translational protein phosphorylation"/>
</dbReference>
<dbReference type="Proteomes" id="UP000009136">
    <property type="component" value="Chromosome 4"/>
</dbReference>
<dbReference type="Bgee" id="ENSBTAG00000003994">
    <property type="expression patterns" value="Expressed in mesenteric lymph node and 103 other cell types or tissues"/>
</dbReference>
<dbReference type="GO" id="GO:0005615">
    <property type="term" value="C:extracellular space"/>
    <property type="evidence" value="ECO:0000314"/>
    <property type="project" value="AgBase"/>
</dbReference>
<dbReference type="GO" id="GO:0042567">
    <property type="term" value="C:insulin-like growth factor ternary complex"/>
    <property type="evidence" value="ECO:0007669"/>
    <property type="project" value="Ensembl"/>
</dbReference>
<dbReference type="GO" id="GO:0005634">
    <property type="term" value="C:nucleus"/>
    <property type="evidence" value="ECO:0007669"/>
    <property type="project" value="UniProtKB-SubCell"/>
</dbReference>
<dbReference type="GO" id="GO:0001968">
    <property type="term" value="F:fibronectin binding"/>
    <property type="evidence" value="ECO:0000318"/>
    <property type="project" value="GO_Central"/>
</dbReference>
<dbReference type="GO" id="GO:0031994">
    <property type="term" value="F:insulin-like growth factor I binding"/>
    <property type="evidence" value="ECO:0000318"/>
    <property type="project" value="GO_Central"/>
</dbReference>
<dbReference type="GO" id="GO:0031995">
    <property type="term" value="F:insulin-like growth factor II binding"/>
    <property type="evidence" value="ECO:0000318"/>
    <property type="project" value="GO_Central"/>
</dbReference>
<dbReference type="GO" id="GO:0008160">
    <property type="term" value="F:protein tyrosine phosphatase activator activity"/>
    <property type="evidence" value="ECO:0000250"/>
    <property type="project" value="UniProtKB"/>
</dbReference>
<dbReference type="GO" id="GO:0006915">
    <property type="term" value="P:apoptotic process"/>
    <property type="evidence" value="ECO:0007669"/>
    <property type="project" value="UniProtKB-KW"/>
</dbReference>
<dbReference type="GO" id="GO:0000165">
    <property type="term" value="P:MAPK cascade"/>
    <property type="evidence" value="ECO:0007669"/>
    <property type="project" value="Ensembl"/>
</dbReference>
<dbReference type="GO" id="GO:0014912">
    <property type="term" value="P:negative regulation of smooth muscle cell migration"/>
    <property type="evidence" value="ECO:0007669"/>
    <property type="project" value="Ensembl"/>
</dbReference>
<dbReference type="GO" id="GO:0048662">
    <property type="term" value="P:negative regulation of smooth muscle cell proliferation"/>
    <property type="evidence" value="ECO:0007669"/>
    <property type="project" value="Ensembl"/>
</dbReference>
<dbReference type="GO" id="GO:0001649">
    <property type="term" value="P:osteoblast differentiation"/>
    <property type="evidence" value="ECO:0007669"/>
    <property type="project" value="Ensembl"/>
</dbReference>
<dbReference type="GO" id="GO:0043065">
    <property type="term" value="P:positive regulation of apoptotic process"/>
    <property type="evidence" value="ECO:0000250"/>
    <property type="project" value="UniProtKB"/>
</dbReference>
<dbReference type="GO" id="GO:0043568">
    <property type="term" value="P:positive regulation of insulin-like growth factor receptor signaling pathway"/>
    <property type="evidence" value="ECO:0007669"/>
    <property type="project" value="Ensembl"/>
</dbReference>
<dbReference type="GO" id="GO:0043410">
    <property type="term" value="P:positive regulation of MAPK cascade"/>
    <property type="evidence" value="ECO:0007669"/>
    <property type="project" value="Ensembl"/>
</dbReference>
<dbReference type="GO" id="GO:0045663">
    <property type="term" value="P:positive regulation of myoblast differentiation"/>
    <property type="evidence" value="ECO:0000250"/>
    <property type="project" value="UniProtKB"/>
</dbReference>
<dbReference type="GO" id="GO:0001558">
    <property type="term" value="P:regulation of cell growth"/>
    <property type="evidence" value="ECO:0007669"/>
    <property type="project" value="Ensembl"/>
</dbReference>
<dbReference type="GO" id="GO:0010906">
    <property type="term" value="P:regulation of glucose metabolic process"/>
    <property type="evidence" value="ECO:0007669"/>
    <property type="project" value="Ensembl"/>
</dbReference>
<dbReference type="GO" id="GO:0043567">
    <property type="term" value="P:regulation of insulin-like growth factor receptor signaling pathway"/>
    <property type="evidence" value="ECO:0000318"/>
    <property type="project" value="GO_Central"/>
</dbReference>
<dbReference type="GO" id="GO:0032868">
    <property type="term" value="P:response to insulin"/>
    <property type="evidence" value="ECO:0000314"/>
    <property type="project" value="AgBase"/>
</dbReference>
<dbReference type="GO" id="GO:0044342">
    <property type="term" value="P:type B pancreatic cell proliferation"/>
    <property type="evidence" value="ECO:0007669"/>
    <property type="project" value="Ensembl"/>
</dbReference>
<dbReference type="CDD" id="cd00191">
    <property type="entry name" value="TY"/>
    <property type="match status" value="1"/>
</dbReference>
<dbReference type="FunFam" id="4.10.40.20:FF:000001">
    <property type="entry name" value="Insulin-like growth factor binding protein 5"/>
    <property type="match status" value="1"/>
</dbReference>
<dbReference type="FunFam" id="4.10.800.10:FF:000005">
    <property type="entry name" value="Putative insulin-like growth factor-binding protein 5"/>
    <property type="match status" value="1"/>
</dbReference>
<dbReference type="Gene3D" id="4.10.40.20">
    <property type="match status" value="1"/>
</dbReference>
<dbReference type="Gene3D" id="4.10.800.10">
    <property type="entry name" value="Thyroglobulin type-1"/>
    <property type="match status" value="1"/>
</dbReference>
<dbReference type="InterPro" id="IPR009030">
    <property type="entry name" value="Growth_fac_rcpt_cys_sf"/>
</dbReference>
<dbReference type="InterPro" id="IPR012211">
    <property type="entry name" value="IGFBP-3"/>
</dbReference>
<dbReference type="InterPro" id="IPR000867">
    <property type="entry name" value="IGFBP-like"/>
</dbReference>
<dbReference type="InterPro" id="IPR022321">
    <property type="entry name" value="IGFBP_1-6_chordata"/>
</dbReference>
<dbReference type="InterPro" id="IPR017891">
    <property type="entry name" value="Insulin_GF-bd_Cys-rich_CS"/>
</dbReference>
<dbReference type="InterPro" id="IPR000716">
    <property type="entry name" value="Thyroglobulin_1"/>
</dbReference>
<dbReference type="InterPro" id="IPR036857">
    <property type="entry name" value="Thyroglobulin_1_sf"/>
</dbReference>
<dbReference type="PANTHER" id="PTHR11551">
    <property type="entry name" value="INSULIN-LIKE GROWTH FACTOR BINDING PROTEIN"/>
    <property type="match status" value="1"/>
</dbReference>
<dbReference type="PANTHER" id="PTHR11551:SF3">
    <property type="entry name" value="INSULIN-LIKE GROWTH FACTOR-BINDING PROTEIN 3"/>
    <property type="match status" value="1"/>
</dbReference>
<dbReference type="Pfam" id="PF00219">
    <property type="entry name" value="IGFBP"/>
    <property type="match status" value="1"/>
</dbReference>
<dbReference type="Pfam" id="PF00086">
    <property type="entry name" value="Thyroglobulin_1"/>
    <property type="match status" value="1"/>
</dbReference>
<dbReference type="PRINTS" id="PR01976">
    <property type="entry name" value="IGFBPFAMILY"/>
</dbReference>
<dbReference type="PRINTS" id="PR01979">
    <property type="entry name" value="IGFBPFAMILY3"/>
</dbReference>
<dbReference type="SMART" id="SM00121">
    <property type="entry name" value="IB"/>
    <property type="match status" value="1"/>
</dbReference>
<dbReference type="SMART" id="SM00211">
    <property type="entry name" value="TY"/>
    <property type="match status" value="1"/>
</dbReference>
<dbReference type="SUPFAM" id="SSF57184">
    <property type="entry name" value="Growth factor receptor domain"/>
    <property type="match status" value="1"/>
</dbReference>
<dbReference type="SUPFAM" id="SSF57610">
    <property type="entry name" value="Thyroglobulin type-1 domain"/>
    <property type="match status" value="1"/>
</dbReference>
<dbReference type="PROSITE" id="PS00222">
    <property type="entry name" value="IGFBP_N_1"/>
    <property type="match status" value="1"/>
</dbReference>
<dbReference type="PROSITE" id="PS51323">
    <property type="entry name" value="IGFBP_N_2"/>
    <property type="match status" value="1"/>
</dbReference>
<dbReference type="PROSITE" id="PS00484">
    <property type="entry name" value="THYROGLOBULIN_1_1"/>
    <property type="match status" value="1"/>
</dbReference>
<dbReference type="PROSITE" id="PS51162">
    <property type="entry name" value="THYROGLOBULIN_1_2"/>
    <property type="match status" value="1"/>
</dbReference>
<organism>
    <name type="scientific">Bos taurus</name>
    <name type="common">Bovine</name>
    <dbReference type="NCBI Taxonomy" id="9913"/>
    <lineage>
        <taxon>Eukaryota</taxon>
        <taxon>Metazoa</taxon>
        <taxon>Chordata</taxon>
        <taxon>Craniata</taxon>
        <taxon>Vertebrata</taxon>
        <taxon>Euteleostomi</taxon>
        <taxon>Mammalia</taxon>
        <taxon>Eutheria</taxon>
        <taxon>Laurasiatheria</taxon>
        <taxon>Artiodactyla</taxon>
        <taxon>Ruminantia</taxon>
        <taxon>Pecora</taxon>
        <taxon>Bovidae</taxon>
        <taxon>Bovinae</taxon>
        <taxon>Bos</taxon>
    </lineage>
</organism>
<name>IBP3_BOVIN</name>
<evidence type="ECO:0000250" key="1"/>
<evidence type="ECO:0000250" key="2">
    <source>
        <dbReference type="UniProtKB" id="P17936"/>
    </source>
</evidence>
<evidence type="ECO:0000255" key="3"/>
<evidence type="ECO:0000255" key="4">
    <source>
        <dbReference type="PROSITE-ProRule" id="PRU00500"/>
    </source>
</evidence>
<evidence type="ECO:0000255" key="5">
    <source>
        <dbReference type="PROSITE-ProRule" id="PRU00653"/>
    </source>
</evidence>
<evidence type="ECO:0000256" key="6">
    <source>
        <dbReference type="SAM" id="MobiDB-lite"/>
    </source>
</evidence>
<evidence type="ECO:0000269" key="7">
    <source>
    </source>
</evidence>
<evidence type="ECO:0000269" key="8">
    <source>
    </source>
</evidence>
<evidence type="ECO:0000305" key="9"/>
<accession>P20959</accession>
<accession>A6QPI3</accession>
<accession>Q9GJV5</accession>
<keyword id="KW-0053">Apoptosis</keyword>
<keyword id="KW-0903">Direct protein sequencing</keyword>
<keyword id="KW-1015">Disulfide bond</keyword>
<keyword id="KW-0325">Glycoprotein</keyword>
<keyword id="KW-0340">Growth factor binding</keyword>
<keyword id="KW-0539">Nucleus</keyword>
<keyword id="KW-0597">Phosphoprotein</keyword>
<keyword id="KW-1185">Reference proteome</keyword>
<keyword id="KW-0964">Secreted</keyword>
<keyword id="KW-0732">Signal</keyword>